<keyword id="KW-0997">Cell inner membrane</keyword>
<keyword id="KW-1003">Cell membrane</keyword>
<keyword id="KW-0472">Membrane</keyword>
<keyword id="KW-0812">Transmembrane</keyword>
<keyword id="KW-1133">Transmembrane helix</keyword>
<dbReference type="EMBL" id="CP000887">
    <property type="protein sequence ID" value="ACD72492.1"/>
    <property type="molecule type" value="Genomic_DNA"/>
</dbReference>
<dbReference type="RefSeq" id="WP_002964151.1">
    <property type="nucleotide sequence ID" value="NC_010742.1"/>
</dbReference>
<dbReference type="SMR" id="B2S5P5"/>
<dbReference type="KEGG" id="bmc:BAbS19_I09770"/>
<dbReference type="HOGENOM" id="CLU_057693_1_0_5"/>
<dbReference type="Proteomes" id="UP000002565">
    <property type="component" value="Chromosome 1"/>
</dbReference>
<dbReference type="GO" id="GO:0005886">
    <property type="term" value="C:plasma membrane"/>
    <property type="evidence" value="ECO:0007669"/>
    <property type="project" value="UniProtKB-SubCell"/>
</dbReference>
<dbReference type="HAMAP" id="MF_01085">
    <property type="entry name" value="UPF0283"/>
    <property type="match status" value="1"/>
</dbReference>
<dbReference type="InterPro" id="IPR021147">
    <property type="entry name" value="DUF697"/>
</dbReference>
<dbReference type="InterPro" id="IPR006507">
    <property type="entry name" value="UPF0283"/>
</dbReference>
<dbReference type="NCBIfam" id="TIGR01620">
    <property type="entry name" value="hyp_HI0043"/>
    <property type="match status" value="1"/>
</dbReference>
<dbReference type="PANTHER" id="PTHR39342">
    <property type="entry name" value="UPF0283 MEMBRANE PROTEIN YCJF"/>
    <property type="match status" value="1"/>
</dbReference>
<dbReference type="PANTHER" id="PTHR39342:SF1">
    <property type="entry name" value="UPF0283 MEMBRANE PROTEIN YCJF"/>
    <property type="match status" value="1"/>
</dbReference>
<dbReference type="Pfam" id="PF05128">
    <property type="entry name" value="DUF697"/>
    <property type="match status" value="1"/>
</dbReference>
<organism>
    <name type="scientific">Brucella abortus (strain S19)</name>
    <dbReference type="NCBI Taxonomy" id="430066"/>
    <lineage>
        <taxon>Bacteria</taxon>
        <taxon>Pseudomonadati</taxon>
        <taxon>Pseudomonadota</taxon>
        <taxon>Alphaproteobacteria</taxon>
        <taxon>Hyphomicrobiales</taxon>
        <taxon>Brucellaceae</taxon>
        <taxon>Brucella/Ochrobactrum group</taxon>
        <taxon>Brucella</taxon>
    </lineage>
</organism>
<protein>
    <recommendedName>
        <fullName evidence="1">UPF0283 membrane protein BAbS19_I09770</fullName>
    </recommendedName>
</protein>
<comment type="subcellular location">
    <subcellularLocation>
        <location evidence="1">Cell inner membrane</location>
        <topology evidence="1">Multi-pass membrane protein</topology>
    </subcellularLocation>
</comment>
<comment type="similarity">
    <text evidence="1">Belongs to the UPF0283 family.</text>
</comment>
<gene>
    <name type="ordered locus">BAbS19_I09770</name>
</gene>
<proteinExistence type="inferred from homology"/>
<sequence length="357" mass="38924">MSDKTPRKPTAFRLEQPARVSAASEQEEPRRPRAVKDLEQITPQADVFDLTDDEAAELEILDPAFEAPERKGWSLSRILFGALGILVSFAIGIWTEDLIRALFARADWLGWTALGVAMVALAAFAAIILRELVALRRLASVQHLRKDAADAAERDDMAAARKAVDALRTIAAGIPETAKGRQLLDSLTDDIIDGRDLIRLAETEILRPLDREARTLVLNASKRVSIVTAISPRALVDIGYVIFESTRLIRRLSQLYGGRPGTLGFIKFARRVIAHLAVTGTIAMGDSVIQQLVGHGLASRLSAKLGEGVVNGLMTARIGIAAMDVVRPFPFNAEKRPGIGDFIGDLARLNSDRNARK</sequence>
<feature type="chain" id="PRO_1000136879" description="UPF0283 membrane protein BAbS19_I09770">
    <location>
        <begin position="1"/>
        <end position="357"/>
    </location>
</feature>
<feature type="transmembrane region" description="Helical" evidence="1">
    <location>
        <begin position="78"/>
        <end position="98"/>
    </location>
</feature>
<feature type="transmembrane region" description="Helical" evidence="1">
    <location>
        <begin position="109"/>
        <end position="129"/>
    </location>
</feature>
<feature type="region of interest" description="Disordered" evidence="2">
    <location>
        <begin position="1"/>
        <end position="36"/>
    </location>
</feature>
<feature type="compositionally biased region" description="Basic and acidic residues" evidence="2">
    <location>
        <begin position="27"/>
        <end position="36"/>
    </location>
</feature>
<reference key="1">
    <citation type="journal article" date="2008" name="PLoS ONE">
        <title>Genome sequence of Brucella abortus vaccine strain S19 compared to virulent strains yields candidate virulence genes.</title>
        <authorList>
            <person name="Crasta O.R."/>
            <person name="Folkerts O."/>
            <person name="Fei Z."/>
            <person name="Mane S.P."/>
            <person name="Evans C."/>
            <person name="Martino-Catt S."/>
            <person name="Bricker B."/>
            <person name="Yu G."/>
            <person name="Du L."/>
            <person name="Sobral B.W."/>
        </authorList>
    </citation>
    <scope>NUCLEOTIDE SEQUENCE [LARGE SCALE GENOMIC DNA]</scope>
    <source>
        <strain>S19</strain>
    </source>
</reference>
<name>Y9770_BRUA1</name>
<accession>B2S5P5</accession>
<evidence type="ECO:0000255" key="1">
    <source>
        <dbReference type="HAMAP-Rule" id="MF_01085"/>
    </source>
</evidence>
<evidence type="ECO:0000256" key="2">
    <source>
        <dbReference type="SAM" id="MobiDB-lite"/>
    </source>
</evidence>